<protein>
    <recommendedName>
        <fullName evidence="6">Disease resistance protein RML1A</fullName>
        <ecNumber evidence="2">3.2.2.6</ecNumber>
    </recommendedName>
    <alternativeName>
        <fullName evidence="5">Protein RESISTANCE TO LEPTOSPHAERIA MACULANS 1A</fullName>
    </alternativeName>
</protein>
<comment type="function">
    <text evidence="3 4">TIR-NB-LRR receptor-like protein that confers resistance to the pathogen Leptosphaeria maculans (blackleg disease).</text>
</comment>
<comment type="catalytic activity">
    <reaction evidence="2">
        <text>NAD(+) + H2O = ADP-D-ribose + nicotinamide + H(+)</text>
        <dbReference type="Rhea" id="RHEA:16301"/>
        <dbReference type="ChEBI" id="CHEBI:15377"/>
        <dbReference type="ChEBI" id="CHEBI:15378"/>
        <dbReference type="ChEBI" id="CHEBI:17154"/>
        <dbReference type="ChEBI" id="CHEBI:57540"/>
        <dbReference type="ChEBI" id="CHEBI:57967"/>
        <dbReference type="EC" id="3.2.2.6"/>
    </reaction>
    <physiologicalReaction direction="left-to-right" evidence="2">
        <dbReference type="Rhea" id="RHEA:16302"/>
    </physiologicalReaction>
</comment>
<comment type="domain">
    <text evidence="2">The TIR domain mediates NAD(+) hydrolase (NADase) activity. Self-association of TIR domains is required for NADase activity.</text>
</comment>
<comment type="disruption phenotype">
    <text evidence="3 4">No visible phenotype under normal growth conditions, but mutant plants are susceptible to the pathogen Leptosphaeria maculans.</text>
</comment>
<comment type="sequence caution" evidence="6">
    <conflict type="erroneous gene model prediction">
        <sequence resource="EMBL-CDS" id="AAF24575"/>
    </conflict>
    <text>The predicted gene has been split into 2 genes: At1g64065 and At1g64070.</text>
</comment>
<feature type="chain" id="PRO_0000433375" description="Disease resistance protein RML1A">
    <location>
        <begin position="1"/>
        <end position="997"/>
    </location>
</feature>
<feature type="domain" description="TIR" evidence="2">
    <location>
        <begin position="12"/>
        <end position="176"/>
    </location>
</feature>
<feature type="domain" description="NB-ARC" evidence="1">
    <location>
        <begin position="191"/>
        <end position="447"/>
    </location>
</feature>
<feature type="repeat" description="LRR 1" evidence="1">
    <location>
        <begin position="194"/>
        <end position="218"/>
    </location>
</feature>
<feature type="repeat" description="LRR 2" evidence="1">
    <location>
        <begin position="534"/>
        <end position="557"/>
    </location>
</feature>
<feature type="repeat" description="LRR 3" evidence="1">
    <location>
        <begin position="600"/>
        <end position="623"/>
    </location>
</feature>
<feature type="repeat" description="LRR 4" evidence="1">
    <location>
        <begin position="624"/>
        <end position="647"/>
    </location>
</feature>
<feature type="repeat" description="LRR 5" evidence="1">
    <location>
        <begin position="649"/>
        <end position="670"/>
    </location>
</feature>
<feature type="repeat" description="LRR 6" evidence="1">
    <location>
        <begin position="671"/>
        <end position="693"/>
    </location>
</feature>
<feature type="repeat" description="LRR 7" evidence="1">
    <location>
        <begin position="694"/>
        <end position="714"/>
    </location>
</feature>
<feature type="repeat" description="LRR 8" evidence="1">
    <location>
        <begin position="715"/>
        <end position="737"/>
    </location>
</feature>
<feature type="repeat" description="LRR 9" evidence="1">
    <location>
        <begin position="758"/>
        <end position="781"/>
    </location>
</feature>
<feature type="repeat" description="LRR 10" evidence="1">
    <location>
        <begin position="783"/>
        <end position="808"/>
    </location>
</feature>
<feature type="active site" evidence="2">
    <location>
        <position position="87"/>
    </location>
</feature>
<keyword id="KW-0067">ATP-binding</keyword>
<keyword id="KW-0378">Hydrolase</keyword>
<keyword id="KW-0433">Leucine-rich repeat</keyword>
<keyword id="KW-0520">NAD</keyword>
<keyword id="KW-0547">Nucleotide-binding</keyword>
<keyword id="KW-0611">Plant defense</keyword>
<keyword id="KW-1185">Reference proteome</keyword>
<keyword id="KW-0677">Repeat</keyword>
<gene>
    <name evidence="5" type="primary">RLM1A</name>
    <name evidence="7" type="ordered locus">At1g64070</name>
    <name evidence="8" type="ORF">F22C12.17</name>
</gene>
<organism>
    <name type="scientific">Arabidopsis thaliana</name>
    <name type="common">Mouse-ear cress</name>
    <dbReference type="NCBI Taxonomy" id="3702"/>
    <lineage>
        <taxon>Eukaryota</taxon>
        <taxon>Viridiplantae</taxon>
        <taxon>Streptophyta</taxon>
        <taxon>Embryophyta</taxon>
        <taxon>Tracheophyta</taxon>
        <taxon>Spermatophyta</taxon>
        <taxon>Magnoliopsida</taxon>
        <taxon>eudicotyledons</taxon>
        <taxon>Gunneridae</taxon>
        <taxon>Pentapetalae</taxon>
        <taxon>rosids</taxon>
        <taxon>malvids</taxon>
        <taxon>Brassicales</taxon>
        <taxon>Brassicaceae</taxon>
        <taxon>Camelineae</taxon>
        <taxon>Arabidopsis</taxon>
    </lineage>
</organism>
<evidence type="ECO:0000255" key="1"/>
<evidence type="ECO:0000255" key="2">
    <source>
        <dbReference type="PROSITE-ProRule" id="PRU00204"/>
    </source>
</evidence>
<evidence type="ECO:0000269" key="3">
    <source>
    </source>
</evidence>
<evidence type="ECO:0000269" key="4">
    <source>
    </source>
</evidence>
<evidence type="ECO:0000303" key="5">
    <source>
    </source>
</evidence>
<evidence type="ECO:0000305" key="6"/>
<evidence type="ECO:0000312" key="7">
    <source>
        <dbReference type="Araport" id="AT1G64070"/>
    </source>
</evidence>
<evidence type="ECO:0000312" key="8">
    <source>
        <dbReference type="EMBL" id="AAF24575.1"/>
    </source>
</evidence>
<name>RLM1A_ARATH</name>
<accession>F4I594</accession>
<accession>Q9SH57</accession>
<sequence>MASSSSSASRTWRYRVFTSFHGSDVRTSFLSHFRKQFNNNGITMFDDQRILRGETISPALTQAIRESRISIVLLSKNYASSGWCLDELLEILKCKDDMGQIVMTVFYGVDPSDVRKQTGEFGIAFNETCACRTEEERQKWSQALNYVGNIAGEHLLNWDNEAKMIEKIARDVSEKLNVTPCRDFDGMVGIEAHLRKIQSLLDLDNDEVKMVAISGPAGIGKSTIGRALHSLLSNRFHHTCFVDNLRGSHPIGLDEYGLKLRLQEQLLSKILNQDGSRICHLGAIKERLCDMKVFIILDDVNDVKQLEALANESNWFGPGSRIIVTTENKELLKQHGINNTYYVGFPSDEEAIKILCRYAFRQSSSRHGFKKLTRSVTELCGKLPLGLRVVGSSLHGKNEEEWEYVIRRLETIIDRDIEQVLRVGYESLHENEQSLFLHIAIFFNYEDGDLVKAMLAENDLDIEHELNILVNKSLIYISTDGRIRMHKLLQLVGRQANQREEPWKRRILIDAQEICHVLENDIGTGAVSGILFDTSGINEVSISNKALRRMCNLRFLSVYKTKHDGYNRMDIPEDMEFPPRLRLLHWDAYPSKCLPLKFRAENLVELDMKDSRLEYLWPGTQLLTKLKKLNLEGSYNLKELPDLSNATNLEMLDLSVCLALAELPSSIKNLHKLDVIYMDLCESLHMIPTNINLASLETMYMTGCPQLKTFPAFSTKIKRLYLVRTGVEEVPASITHCSRLLKIDLSGSRNLKSITHLPSSLQTLDLSSTDIEMIADSCIKDLQRLDHLRLCRCRKLKSLPELPASLRLLTAEDCESLERVTYPLNTPTGQLNFTNCLKLGEEAQRVIIQQSLVKHACFPGSVMPSEFNHRARGNSLKILVKSSASFAFKACVLISPRQLQCERNQRRVKIRCRVTDGRGRFVGSKVVSLEHPNHSTGIRTKHLCFFNGVLTEVSCDALCFVFKISAYNPLDNYEISECAVQILTNEPERRSCDGGSE</sequence>
<dbReference type="EC" id="3.2.2.6" evidence="2"/>
<dbReference type="EMBL" id="AC007764">
    <property type="protein sequence ID" value="AAF24575.1"/>
    <property type="status" value="ALT_SEQ"/>
    <property type="molecule type" value="Genomic_DNA"/>
</dbReference>
<dbReference type="EMBL" id="CP002684">
    <property type="protein sequence ID" value="AEE34188.1"/>
    <property type="molecule type" value="Genomic_DNA"/>
</dbReference>
<dbReference type="RefSeq" id="NP_176590.2">
    <property type="nucleotide sequence ID" value="NM_105080.3"/>
</dbReference>
<dbReference type="SMR" id="F4I594"/>
<dbReference type="FunCoup" id="F4I594">
    <property type="interactions" value="5"/>
</dbReference>
<dbReference type="STRING" id="3702.F4I594"/>
<dbReference type="iPTMnet" id="F4I594"/>
<dbReference type="PaxDb" id="3702-AT1G64070.1"/>
<dbReference type="ProteomicsDB" id="228171"/>
<dbReference type="EnsemblPlants" id="AT1G64070.1">
    <property type="protein sequence ID" value="AT1G64070.1"/>
    <property type="gene ID" value="AT1G64070"/>
</dbReference>
<dbReference type="GeneID" id="842711"/>
<dbReference type="Gramene" id="AT1G64070.1">
    <property type="protein sequence ID" value="AT1G64070.1"/>
    <property type="gene ID" value="AT1G64070"/>
</dbReference>
<dbReference type="KEGG" id="ath:AT1G64070"/>
<dbReference type="Araport" id="AT1G64070"/>
<dbReference type="TAIR" id="AT1G64070">
    <property type="gene designation" value="RLM1"/>
</dbReference>
<dbReference type="HOGENOM" id="CLU_001561_0_1_1"/>
<dbReference type="InParanoid" id="F4I594"/>
<dbReference type="OMA" id="YEISECA"/>
<dbReference type="PRO" id="PR:F4I594"/>
<dbReference type="Proteomes" id="UP000006548">
    <property type="component" value="Chromosome 1"/>
</dbReference>
<dbReference type="ExpressionAtlas" id="F4I594">
    <property type="expression patterns" value="baseline and differential"/>
</dbReference>
<dbReference type="GO" id="GO:0043531">
    <property type="term" value="F:ADP binding"/>
    <property type="evidence" value="ECO:0007669"/>
    <property type="project" value="InterPro"/>
</dbReference>
<dbReference type="GO" id="GO:0005524">
    <property type="term" value="F:ATP binding"/>
    <property type="evidence" value="ECO:0007669"/>
    <property type="project" value="UniProtKB-KW"/>
</dbReference>
<dbReference type="GO" id="GO:0061809">
    <property type="term" value="F:NAD+ nucleosidase activity, cyclic ADP-ribose generating"/>
    <property type="evidence" value="ECO:0007669"/>
    <property type="project" value="UniProtKB-EC"/>
</dbReference>
<dbReference type="GO" id="GO:0050832">
    <property type="term" value="P:defense response to fungus"/>
    <property type="evidence" value="ECO:0000315"/>
    <property type="project" value="TAIR"/>
</dbReference>
<dbReference type="GO" id="GO:0007165">
    <property type="term" value="P:signal transduction"/>
    <property type="evidence" value="ECO:0007669"/>
    <property type="project" value="InterPro"/>
</dbReference>
<dbReference type="FunFam" id="1.10.8.430:FF:000002">
    <property type="entry name" value="Disease resistance protein (TIR-NBS-LRR class)"/>
    <property type="match status" value="1"/>
</dbReference>
<dbReference type="FunFam" id="3.40.50.10140:FF:000007">
    <property type="entry name" value="Disease resistance protein (TIR-NBS-LRR class)"/>
    <property type="match status" value="1"/>
</dbReference>
<dbReference type="FunFam" id="3.40.50.300:FF:001002">
    <property type="entry name" value="Disease resistance protein (TIR-NBS-LRR class)"/>
    <property type="match status" value="1"/>
</dbReference>
<dbReference type="FunFam" id="3.80.10.10:FF:000386">
    <property type="entry name" value="Disease resistance protein RPS4"/>
    <property type="match status" value="1"/>
</dbReference>
<dbReference type="Gene3D" id="1.10.8.430">
    <property type="entry name" value="Helical domain of apoptotic protease-activating factors"/>
    <property type="match status" value="1"/>
</dbReference>
<dbReference type="Gene3D" id="3.40.50.300">
    <property type="entry name" value="P-loop containing nucleotide triphosphate hydrolases"/>
    <property type="match status" value="1"/>
</dbReference>
<dbReference type="Gene3D" id="3.80.10.10">
    <property type="entry name" value="Ribonuclease Inhibitor"/>
    <property type="match status" value="2"/>
</dbReference>
<dbReference type="Gene3D" id="3.40.50.10140">
    <property type="entry name" value="Toll/interleukin-1 receptor homology (TIR) domain"/>
    <property type="match status" value="1"/>
</dbReference>
<dbReference type="InterPro" id="IPR042197">
    <property type="entry name" value="Apaf_helical"/>
</dbReference>
<dbReference type="InterPro" id="IPR044974">
    <property type="entry name" value="Disease_R_plants"/>
</dbReference>
<dbReference type="InterPro" id="IPR032675">
    <property type="entry name" value="LRR_dom_sf"/>
</dbReference>
<dbReference type="InterPro" id="IPR002182">
    <property type="entry name" value="NB-ARC"/>
</dbReference>
<dbReference type="InterPro" id="IPR027417">
    <property type="entry name" value="P-loop_NTPase"/>
</dbReference>
<dbReference type="InterPro" id="IPR000157">
    <property type="entry name" value="TIR_dom"/>
</dbReference>
<dbReference type="InterPro" id="IPR035897">
    <property type="entry name" value="Toll_tir_struct_dom_sf"/>
</dbReference>
<dbReference type="InterPro" id="IPR036390">
    <property type="entry name" value="WH_DNA-bd_sf"/>
</dbReference>
<dbReference type="PANTHER" id="PTHR11017:SF418">
    <property type="entry name" value="DISEASE RESISTANCE PROTEIN (TIR-NBS-LRR CLASS) FAMILY-RELATED"/>
    <property type="match status" value="1"/>
</dbReference>
<dbReference type="PANTHER" id="PTHR11017">
    <property type="entry name" value="LEUCINE-RICH REPEAT-CONTAINING PROTEIN"/>
    <property type="match status" value="1"/>
</dbReference>
<dbReference type="Pfam" id="PF00931">
    <property type="entry name" value="NB-ARC"/>
    <property type="match status" value="1"/>
</dbReference>
<dbReference type="Pfam" id="PF01582">
    <property type="entry name" value="TIR"/>
    <property type="match status" value="1"/>
</dbReference>
<dbReference type="Pfam" id="PF23282">
    <property type="entry name" value="WHD_ROQ1"/>
    <property type="match status" value="1"/>
</dbReference>
<dbReference type="PRINTS" id="PR00364">
    <property type="entry name" value="DISEASERSIST"/>
</dbReference>
<dbReference type="SMART" id="SM00255">
    <property type="entry name" value="TIR"/>
    <property type="match status" value="1"/>
</dbReference>
<dbReference type="SUPFAM" id="SSF52058">
    <property type="entry name" value="L domain-like"/>
    <property type="match status" value="1"/>
</dbReference>
<dbReference type="SUPFAM" id="SSF52540">
    <property type="entry name" value="P-loop containing nucleoside triphosphate hydrolases"/>
    <property type="match status" value="1"/>
</dbReference>
<dbReference type="SUPFAM" id="SSF52200">
    <property type="entry name" value="Toll/Interleukin receptor TIR domain"/>
    <property type="match status" value="1"/>
</dbReference>
<dbReference type="SUPFAM" id="SSF46785">
    <property type="entry name" value="Winged helix' DNA-binding domain"/>
    <property type="match status" value="1"/>
</dbReference>
<dbReference type="PROSITE" id="PS50104">
    <property type="entry name" value="TIR"/>
    <property type="match status" value="1"/>
</dbReference>
<reference key="1">
    <citation type="journal article" date="2000" name="Nature">
        <title>Sequence and analysis of chromosome 1 of the plant Arabidopsis thaliana.</title>
        <authorList>
            <person name="Theologis A."/>
            <person name="Ecker J.R."/>
            <person name="Palm C.J."/>
            <person name="Federspiel N.A."/>
            <person name="Kaul S."/>
            <person name="White O."/>
            <person name="Alonso J."/>
            <person name="Altafi H."/>
            <person name="Araujo R."/>
            <person name="Bowman C.L."/>
            <person name="Brooks S.Y."/>
            <person name="Buehler E."/>
            <person name="Chan A."/>
            <person name="Chao Q."/>
            <person name="Chen H."/>
            <person name="Cheuk R.F."/>
            <person name="Chin C.W."/>
            <person name="Chung M.K."/>
            <person name="Conn L."/>
            <person name="Conway A.B."/>
            <person name="Conway A.R."/>
            <person name="Creasy T.H."/>
            <person name="Dewar K."/>
            <person name="Dunn P."/>
            <person name="Etgu P."/>
            <person name="Feldblyum T.V."/>
            <person name="Feng J.-D."/>
            <person name="Fong B."/>
            <person name="Fujii C.Y."/>
            <person name="Gill J.E."/>
            <person name="Goldsmith A.D."/>
            <person name="Haas B."/>
            <person name="Hansen N.F."/>
            <person name="Hughes B."/>
            <person name="Huizar L."/>
            <person name="Hunter J.L."/>
            <person name="Jenkins J."/>
            <person name="Johnson-Hopson C."/>
            <person name="Khan S."/>
            <person name="Khaykin E."/>
            <person name="Kim C.J."/>
            <person name="Koo H.L."/>
            <person name="Kremenetskaia I."/>
            <person name="Kurtz D.B."/>
            <person name="Kwan A."/>
            <person name="Lam B."/>
            <person name="Langin-Hooper S."/>
            <person name="Lee A."/>
            <person name="Lee J.M."/>
            <person name="Lenz C.A."/>
            <person name="Li J.H."/>
            <person name="Li Y.-P."/>
            <person name="Lin X."/>
            <person name="Liu S.X."/>
            <person name="Liu Z.A."/>
            <person name="Luros J.S."/>
            <person name="Maiti R."/>
            <person name="Marziali A."/>
            <person name="Militscher J."/>
            <person name="Miranda M."/>
            <person name="Nguyen M."/>
            <person name="Nierman W.C."/>
            <person name="Osborne B.I."/>
            <person name="Pai G."/>
            <person name="Peterson J."/>
            <person name="Pham P.K."/>
            <person name="Rizzo M."/>
            <person name="Rooney T."/>
            <person name="Rowley D."/>
            <person name="Sakano H."/>
            <person name="Salzberg S.L."/>
            <person name="Schwartz J.R."/>
            <person name="Shinn P."/>
            <person name="Southwick A.M."/>
            <person name="Sun H."/>
            <person name="Tallon L.J."/>
            <person name="Tambunga G."/>
            <person name="Toriumi M.J."/>
            <person name="Town C.D."/>
            <person name="Utterback T."/>
            <person name="Van Aken S."/>
            <person name="Vaysberg M."/>
            <person name="Vysotskaia V.S."/>
            <person name="Walker M."/>
            <person name="Wu D."/>
            <person name="Yu G."/>
            <person name="Fraser C.M."/>
            <person name="Venter J.C."/>
            <person name="Davis R.W."/>
        </authorList>
    </citation>
    <scope>NUCLEOTIDE SEQUENCE [LARGE SCALE GENOMIC DNA]</scope>
    <source>
        <strain>cv. Columbia</strain>
    </source>
</reference>
<reference key="2">
    <citation type="journal article" date="2017" name="Plant J.">
        <title>Araport11: a complete reannotation of the Arabidopsis thaliana reference genome.</title>
        <authorList>
            <person name="Cheng C.Y."/>
            <person name="Krishnakumar V."/>
            <person name="Chan A.P."/>
            <person name="Thibaud-Nissen F."/>
            <person name="Schobel S."/>
            <person name="Town C.D."/>
        </authorList>
    </citation>
    <scope>GENOME REANNOTATION</scope>
    <source>
        <strain>cv. Columbia</strain>
    </source>
</reference>
<reference key="3">
    <citation type="journal article" date="2006" name="Plant J.">
        <title>Transgressive segregation reveals two Arabidopsis TIR-NB-LRR resistance genes effective against Leptosphaeria maculans, causal agent of blackleg disease.</title>
        <authorList>
            <person name="Staal J."/>
            <person name="Kaliff M."/>
            <person name="Bohman S."/>
            <person name="Dixelius C."/>
        </authorList>
    </citation>
    <scope>FUNCTION</scope>
    <scope>DISRUPTION PHENOTYPE</scope>
</reference>
<reference key="4">
    <citation type="journal article" date="2009" name="New Phytol.">
        <title>Layers of defense responses to Leptosphaeria maculans below the RLM1- and camalexin-dependent resistances.</title>
        <authorList>
            <person name="Persson M."/>
            <person name="Staal J."/>
            <person name="Oide S."/>
            <person name="Dixelius C."/>
        </authorList>
    </citation>
    <scope>FUNCTION</scope>
    <scope>DISRUPTION PHENOTYPE</scope>
</reference>
<proteinExistence type="inferred from homology"/>